<sequence length="473" mass="52677">MAVKSYQAGVTQYRQSYWQPDYMPLDTDILACFKITPQPGVDREEAAAAVAAESSCGTWTTVWTDLLTDLDYYKGRAYRLEDVPGDDTCYYAFIAYPIDLFEEGSVVNVFTSLVGNVFGFKAVRALRLEDLRFPIAYVKTCGGPPHGIQVERDKLNKYGRPLLGCTIKPKLGLSAKNYGRACYEALRGGLDFTKDDENINSQPFMRWRDRFDFVMEAVQKAEQETGERKGHYLNVTAPTPEEMYKRAEYAKEIRAPIIMHDYLAGGLCANAGLANWCRNNGMLLHIHRAMHAVIDRNPHHGIHFRVLTKILRLSGGDHLHTGTVVGKLEGDRASTLGWIDLLRESFVPEDRSRGIFFDQDWGSMPGGFAVASGGIHVWHMPALVTIFGDDSVLQFGGGTLGHPWGNAAGAHANRVALEACVQARGEGRHLEKEGKDILTAAAAHSPELKIAMETWKEIKFEFETMDKLAIANK</sequence>
<proteinExistence type="inferred from homology"/>
<feature type="chain" id="PRO_0000251451" description="Ribulose bisphosphate carboxylase large chain 1">
    <location>
        <begin position="1"/>
        <end position="473"/>
    </location>
</feature>
<feature type="active site" description="Proton acceptor" evidence="1">
    <location>
        <position position="168"/>
    </location>
</feature>
<feature type="active site" description="Proton acceptor" evidence="1">
    <location>
        <position position="287"/>
    </location>
</feature>
<feature type="binding site" description="in homodimeric partner" evidence="1">
    <location>
        <position position="116"/>
    </location>
    <ligand>
        <name>substrate</name>
    </ligand>
</feature>
<feature type="binding site" evidence="1">
    <location>
        <position position="166"/>
    </location>
    <ligand>
        <name>substrate</name>
    </ligand>
</feature>
<feature type="binding site" evidence="1">
    <location>
        <position position="170"/>
    </location>
    <ligand>
        <name>substrate</name>
    </ligand>
</feature>
<feature type="binding site" description="via carbamate group" evidence="1">
    <location>
        <position position="194"/>
    </location>
    <ligand>
        <name>Mg(2+)</name>
        <dbReference type="ChEBI" id="CHEBI:18420"/>
    </ligand>
</feature>
<feature type="binding site" evidence="1">
    <location>
        <position position="196"/>
    </location>
    <ligand>
        <name>Mg(2+)</name>
        <dbReference type="ChEBI" id="CHEBI:18420"/>
    </ligand>
</feature>
<feature type="binding site" evidence="1">
    <location>
        <position position="197"/>
    </location>
    <ligand>
        <name>Mg(2+)</name>
        <dbReference type="ChEBI" id="CHEBI:18420"/>
    </ligand>
</feature>
<feature type="binding site" evidence="1">
    <location>
        <position position="288"/>
    </location>
    <ligand>
        <name>substrate</name>
    </ligand>
</feature>
<feature type="binding site" evidence="1">
    <location>
        <position position="320"/>
    </location>
    <ligand>
        <name>substrate</name>
    </ligand>
</feature>
<feature type="binding site" evidence="1">
    <location>
        <position position="372"/>
    </location>
    <ligand>
        <name>substrate</name>
    </ligand>
</feature>
<feature type="site" description="Transition state stabilizer" evidence="1">
    <location>
        <position position="327"/>
    </location>
</feature>
<feature type="modified residue" description="N6-carboxylysine" evidence="1">
    <location>
        <position position="194"/>
    </location>
</feature>
<dbReference type="EC" id="4.1.1.39" evidence="1"/>
<dbReference type="EMBL" id="CP000115">
    <property type="protein sequence ID" value="ABA05246.1"/>
    <property type="molecule type" value="Genomic_DNA"/>
</dbReference>
<dbReference type="RefSeq" id="WP_011315233.1">
    <property type="nucleotide sequence ID" value="NC_007406.1"/>
</dbReference>
<dbReference type="SMR" id="Q3SR45"/>
<dbReference type="STRING" id="323098.Nwi_1987"/>
<dbReference type="KEGG" id="nwi:Nwi_1987"/>
<dbReference type="eggNOG" id="COG1850">
    <property type="taxonomic scope" value="Bacteria"/>
</dbReference>
<dbReference type="HOGENOM" id="CLU_031450_2_0_5"/>
<dbReference type="OrthoDB" id="9764279at2"/>
<dbReference type="Proteomes" id="UP000002531">
    <property type="component" value="Chromosome"/>
</dbReference>
<dbReference type="GO" id="GO:0000287">
    <property type="term" value="F:magnesium ion binding"/>
    <property type="evidence" value="ECO:0007669"/>
    <property type="project" value="UniProtKB-UniRule"/>
</dbReference>
<dbReference type="GO" id="GO:0004497">
    <property type="term" value="F:monooxygenase activity"/>
    <property type="evidence" value="ECO:0007669"/>
    <property type="project" value="UniProtKB-KW"/>
</dbReference>
<dbReference type="GO" id="GO:0016984">
    <property type="term" value="F:ribulose-bisphosphate carboxylase activity"/>
    <property type="evidence" value="ECO:0007669"/>
    <property type="project" value="UniProtKB-UniRule"/>
</dbReference>
<dbReference type="GO" id="GO:0019253">
    <property type="term" value="P:reductive pentose-phosphate cycle"/>
    <property type="evidence" value="ECO:0007669"/>
    <property type="project" value="UniProtKB-UniRule"/>
</dbReference>
<dbReference type="Gene3D" id="3.20.20.110">
    <property type="entry name" value="Ribulose bisphosphate carboxylase, large subunit, C-terminal domain"/>
    <property type="match status" value="1"/>
</dbReference>
<dbReference type="Gene3D" id="3.30.70.150">
    <property type="entry name" value="RuBisCO large subunit, N-terminal domain"/>
    <property type="match status" value="1"/>
</dbReference>
<dbReference type="HAMAP" id="MF_01338">
    <property type="entry name" value="RuBisCO_L_type1"/>
    <property type="match status" value="1"/>
</dbReference>
<dbReference type="InterPro" id="IPR033966">
    <property type="entry name" value="RuBisCO"/>
</dbReference>
<dbReference type="InterPro" id="IPR020878">
    <property type="entry name" value="RuBisCo_large_chain_AS"/>
</dbReference>
<dbReference type="InterPro" id="IPR000685">
    <property type="entry name" value="RuBisCO_lsu_C"/>
</dbReference>
<dbReference type="InterPro" id="IPR036376">
    <property type="entry name" value="RuBisCO_lsu_C_sf"/>
</dbReference>
<dbReference type="InterPro" id="IPR017443">
    <property type="entry name" value="RuBisCO_lsu_fd_N"/>
</dbReference>
<dbReference type="InterPro" id="IPR036422">
    <property type="entry name" value="RuBisCO_lsu_N_sf"/>
</dbReference>
<dbReference type="InterPro" id="IPR020888">
    <property type="entry name" value="RuBisCO_lsuI"/>
</dbReference>
<dbReference type="NCBIfam" id="NF003252">
    <property type="entry name" value="PRK04208.1"/>
    <property type="match status" value="1"/>
</dbReference>
<dbReference type="PANTHER" id="PTHR42704">
    <property type="entry name" value="RIBULOSE BISPHOSPHATE CARBOXYLASE"/>
    <property type="match status" value="1"/>
</dbReference>
<dbReference type="PANTHER" id="PTHR42704:SF17">
    <property type="entry name" value="RIBULOSE BISPHOSPHATE CARBOXYLASE LARGE CHAIN"/>
    <property type="match status" value="1"/>
</dbReference>
<dbReference type="Pfam" id="PF00016">
    <property type="entry name" value="RuBisCO_large"/>
    <property type="match status" value="1"/>
</dbReference>
<dbReference type="Pfam" id="PF02788">
    <property type="entry name" value="RuBisCO_large_N"/>
    <property type="match status" value="1"/>
</dbReference>
<dbReference type="SFLD" id="SFLDG01052">
    <property type="entry name" value="RuBisCO"/>
    <property type="match status" value="1"/>
</dbReference>
<dbReference type="SFLD" id="SFLDS00014">
    <property type="entry name" value="RuBisCO"/>
    <property type="match status" value="1"/>
</dbReference>
<dbReference type="SFLD" id="SFLDG00301">
    <property type="entry name" value="RuBisCO-like_proteins"/>
    <property type="match status" value="1"/>
</dbReference>
<dbReference type="SUPFAM" id="SSF51649">
    <property type="entry name" value="RuBisCo, C-terminal domain"/>
    <property type="match status" value="1"/>
</dbReference>
<dbReference type="SUPFAM" id="SSF54966">
    <property type="entry name" value="RuBisCO, large subunit, small (N-terminal) domain"/>
    <property type="match status" value="1"/>
</dbReference>
<dbReference type="PROSITE" id="PS00157">
    <property type="entry name" value="RUBISCO_LARGE"/>
    <property type="match status" value="1"/>
</dbReference>
<name>RBL1A_NITWN</name>
<gene>
    <name evidence="1" type="primary">cbbL1</name>
    <name type="ordered locus">Nwi_1987</name>
</gene>
<reference key="1">
    <citation type="journal article" date="2006" name="Appl. Environ. Microbiol.">
        <title>Genome sequence of the chemolithoautotrophic nitrite-oxidizing bacterium Nitrobacter winogradskyi Nb-255.</title>
        <authorList>
            <person name="Starkenburg S.R."/>
            <person name="Chain P.S.G."/>
            <person name="Sayavedra-Soto L.A."/>
            <person name="Hauser L."/>
            <person name="Land M.L."/>
            <person name="Larimer F.W."/>
            <person name="Malfatti S.A."/>
            <person name="Klotz M.G."/>
            <person name="Bottomley P.J."/>
            <person name="Arp D.J."/>
            <person name="Hickey W.J."/>
        </authorList>
    </citation>
    <scope>NUCLEOTIDE SEQUENCE [LARGE SCALE GENOMIC DNA]</scope>
    <source>
        <strain>ATCC 25391 / DSM 10237 / CIP 104748 / NCIMB 11846 / Nb-255</strain>
    </source>
</reference>
<keyword id="KW-0113">Calvin cycle</keyword>
<keyword id="KW-0120">Carbon dioxide fixation</keyword>
<keyword id="KW-0456">Lyase</keyword>
<keyword id="KW-0460">Magnesium</keyword>
<keyword id="KW-0479">Metal-binding</keyword>
<keyword id="KW-0503">Monooxygenase</keyword>
<keyword id="KW-0560">Oxidoreductase</keyword>
<keyword id="KW-1185">Reference proteome</keyword>
<comment type="function">
    <text evidence="1">RuBisCO catalyzes two reactions: the carboxylation of D-ribulose 1,5-bisphosphate, the primary event in carbon dioxide fixation, as well as the oxidative fragmentation of the pentose substrate. Both reactions occur simultaneously and in competition at the same active site.</text>
</comment>
<comment type="catalytic activity">
    <reaction evidence="1">
        <text>2 (2R)-3-phosphoglycerate + 2 H(+) = D-ribulose 1,5-bisphosphate + CO2 + H2O</text>
        <dbReference type="Rhea" id="RHEA:23124"/>
        <dbReference type="ChEBI" id="CHEBI:15377"/>
        <dbReference type="ChEBI" id="CHEBI:15378"/>
        <dbReference type="ChEBI" id="CHEBI:16526"/>
        <dbReference type="ChEBI" id="CHEBI:57870"/>
        <dbReference type="ChEBI" id="CHEBI:58272"/>
        <dbReference type="EC" id="4.1.1.39"/>
    </reaction>
</comment>
<comment type="catalytic activity">
    <reaction evidence="1">
        <text>D-ribulose 1,5-bisphosphate + O2 = 2-phosphoglycolate + (2R)-3-phosphoglycerate + 2 H(+)</text>
        <dbReference type="Rhea" id="RHEA:36631"/>
        <dbReference type="ChEBI" id="CHEBI:15378"/>
        <dbReference type="ChEBI" id="CHEBI:15379"/>
        <dbReference type="ChEBI" id="CHEBI:57870"/>
        <dbReference type="ChEBI" id="CHEBI:58033"/>
        <dbReference type="ChEBI" id="CHEBI:58272"/>
    </reaction>
</comment>
<comment type="cofactor">
    <cofactor evidence="1">
        <name>Mg(2+)</name>
        <dbReference type="ChEBI" id="CHEBI:18420"/>
    </cofactor>
    <text evidence="1">Binds 1 Mg(2+) ion per subunit.</text>
</comment>
<comment type="subunit">
    <text evidence="1">Heterohexadecamer of 8 large chains and 8 small chains.</text>
</comment>
<comment type="miscellaneous">
    <text evidence="1">The basic functional RuBisCO is composed of a large chain homodimer in a 'head-to-tail' conformation. In form I RuBisCO this homodimer is arranged in a barrel-like tetramer with the small subunits forming a tetrameric 'cap' on each end of the 'barrel'.</text>
</comment>
<comment type="similarity">
    <text evidence="1">Belongs to the RuBisCO large chain family. Type I subfamily.</text>
</comment>
<evidence type="ECO:0000255" key="1">
    <source>
        <dbReference type="HAMAP-Rule" id="MF_01338"/>
    </source>
</evidence>
<accession>Q3SR45</accession>
<protein>
    <recommendedName>
        <fullName evidence="1">Ribulose bisphosphate carboxylase large chain 1</fullName>
        <shortName evidence="1">RuBisCO large subunit 1</shortName>
        <ecNumber evidence="1">4.1.1.39</ecNumber>
    </recommendedName>
</protein>
<organism>
    <name type="scientific">Nitrobacter winogradskyi (strain ATCC 25391 / DSM 10237 / CIP 104748 / NCIMB 11846 / Nb-255)</name>
    <dbReference type="NCBI Taxonomy" id="323098"/>
    <lineage>
        <taxon>Bacteria</taxon>
        <taxon>Pseudomonadati</taxon>
        <taxon>Pseudomonadota</taxon>
        <taxon>Alphaproteobacteria</taxon>
        <taxon>Hyphomicrobiales</taxon>
        <taxon>Nitrobacteraceae</taxon>
        <taxon>Nitrobacter</taxon>
    </lineage>
</organism>